<organism>
    <name type="scientific">Shewanella denitrificans (strain OS217 / ATCC BAA-1090 / DSM 15013)</name>
    <dbReference type="NCBI Taxonomy" id="318161"/>
    <lineage>
        <taxon>Bacteria</taxon>
        <taxon>Pseudomonadati</taxon>
        <taxon>Pseudomonadota</taxon>
        <taxon>Gammaproteobacteria</taxon>
        <taxon>Alteromonadales</taxon>
        <taxon>Shewanellaceae</taxon>
        <taxon>Shewanella</taxon>
    </lineage>
</organism>
<reference key="1">
    <citation type="submission" date="2006-03" db="EMBL/GenBank/DDBJ databases">
        <title>Complete sequence of Shewanella denitrificans OS217.</title>
        <authorList>
            <consortium name="US DOE Joint Genome Institute"/>
            <person name="Copeland A."/>
            <person name="Lucas S."/>
            <person name="Lapidus A."/>
            <person name="Barry K."/>
            <person name="Detter J.C."/>
            <person name="Glavina del Rio T."/>
            <person name="Hammon N."/>
            <person name="Israni S."/>
            <person name="Dalin E."/>
            <person name="Tice H."/>
            <person name="Pitluck S."/>
            <person name="Brettin T."/>
            <person name="Bruce D."/>
            <person name="Han C."/>
            <person name="Tapia R."/>
            <person name="Gilna P."/>
            <person name="Kiss H."/>
            <person name="Schmutz J."/>
            <person name="Larimer F."/>
            <person name="Land M."/>
            <person name="Hauser L."/>
            <person name="Kyrpides N."/>
            <person name="Lykidis A."/>
            <person name="Richardson P."/>
        </authorList>
    </citation>
    <scope>NUCLEOTIDE SEQUENCE [LARGE SCALE GENOMIC DNA]</scope>
    <source>
        <strain>OS217 / ATCC BAA-1090 / DSM 15013</strain>
    </source>
</reference>
<gene>
    <name evidence="1" type="primary">pdxA</name>
    <name type="ordered locus">Sden_2887</name>
</gene>
<protein>
    <recommendedName>
        <fullName evidence="1">4-hydroxythreonine-4-phosphate dehydrogenase</fullName>
        <ecNumber evidence="1">1.1.1.262</ecNumber>
    </recommendedName>
    <alternativeName>
        <fullName evidence="1">4-(phosphohydroxy)-L-threonine dehydrogenase</fullName>
    </alternativeName>
</protein>
<keyword id="KW-0170">Cobalt</keyword>
<keyword id="KW-0963">Cytoplasm</keyword>
<keyword id="KW-0460">Magnesium</keyword>
<keyword id="KW-0479">Metal-binding</keyword>
<keyword id="KW-0520">NAD</keyword>
<keyword id="KW-0521">NADP</keyword>
<keyword id="KW-0560">Oxidoreductase</keyword>
<keyword id="KW-0664">Pyridoxine biosynthesis</keyword>
<keyword id="KW-1185">Reference proteome</keyword>
<keyword id="KW-0862">Zinc</keyword>
<sequence length="328" mass="35054">MTKRIAITAGEPASIGPDLVITLAQQAWPAELVVCANPELLLARAAKLGLPLRLIPYHSENKPQPQAAGTLTIAPFELAAEVECGVLNELNSAYVVDTLRFAGEKNMSREFDAVVTGPVHKGIINQAGIAFSGHTEYFAVQANCQDVVMMLAAPGLQVALMTTHIPLAYVAKAITRERLHHIIHILHKELKSKFGLGSPKIYVCGLNPHAGEDGHIGREELDVMIPALNELRAQGIQLVGPLPADTLFQPKYLQDADVILAMYHDQGLPVLKSLGFGKSVNITLGLPYIRTSVDHGTALELAGTGLADSGSFTCALNKAIELASKVSN</sequence>
<dbReference type="EC" id="1.1.1.262" evidence="1"/>
<dbReference type="EMBL" id="CP000302">
    <property type="protein sequence ID" value="ABE56166.1"/>
    <property type="molecule type" value="Genomic_DNA"/>
</dbReference>
<dbReference type="SMR" id="Q12K60"/>
<dbReference type="STRING" id="318161.Sden_2887"/>
<dbReference type="KEGG" id="sdn:Sden_2887"/>
<dbReference type="eggNOG" id="COG1995">
    <property type="taxonomic scope" value="Bacteria"/>
</dbReference>
<dbReference type="HOGENOM" id="CLU_040168_2_0_6"/>
<dbReference type="UniPathway" id="UPA00244">
    <property type="reaction ID" value="UER00312"/>
</dbReference>
<dbReference type="Proteomes" id="UP000001982">
    <property type="component" value="Chromosome"/>
</dbReference>
<dbReference type="GO" id="GO:0005737">
    <property type="term" value="C:cytoplasm"/>
    <property type="evidence" value="ECO:0007669"/>
    <property type="project" value="UniProtKB-SubCell"/>
</dbReference>
<dbReference type="GO" id="GO:0050570">
    <property type="term" value="F:4-hydroxythreonine-4-phosphate dehydrogenase activity"/>
    <property type="evidence" value="ECO:0007669"/>
    <property type="project" value="UniProtKB-UniRule"/>
</dbReference>
<dbReference type="GO" id="GO:0050897">
    <property type="term" value="F:cobalt ion binding"/>
    <property type="evidence" value="ECO:0007669"/>
    <property type="project" value="UniProtKB-UniRule"/>
</dbReference>
<dbReference type="GO" id="GO:0000287">
    <property type="term" value="F:magnesium ion binding"/>
    <property type="evidence" value="ECO:0007669"/>
    <property type="project" value="UniProtKB-UniRule"/>
</dbReference>
<dbReference type="GO" id="GO:0051287">
    <property type="term" value="F:NAD binding"/>
    <property type="evidence" value="ECO:0007669"/>
    <property type="project" value="InterPro"/>
</dbReference>
<dbReference type="GO" id="GO:0008270">
    <property type="term" value="F:zinc ion binding"/>
    <property type="evidence" value="ECO:0007669"/>
    <property type="project" value="UniProtKB-UniRule"/>
</dbReference>
<dbReference type="GO" id="GO:0042823">
    <property type="term" value="P:pyridoxal phosphate biosynthetic process"/>
    <property type="evidence" value="ECO:0007669"/>
    <property type="project" value="UniProtKB-UniRule"/>
</dbReference>
<dbReference type="GO" id="GO:0008615">
    <property type="term" value="P:pyridoxine biosynthetic process"/>
    <property type="evidence" value="ECO:0007669"/>
    <property type="project" value="UniProtKB-UniRule"/>
</dbReference>
<dbReference type="Gene3D" id="3.40.718.10">
    <property type="entry name" value="Isopropylmalate Dehydrogenase"/>
    <property type="match status" value="1"/>
</dbReference>
<dbReference type="HAMAP" id="MF_00536">
    <property type="entry name" value="PdxA"/>
    <property type="match status" value="1"/>
</dbReference>
<dbReference type="InterPro" id="IPR037510">
    <property type="entry name" value="PdxA"/>
</dbReference>
<dbReference type="InterPro" id="IPR005255">
    <property type="entry name" value="PdxA_fam"/>
</dbReference>
<dbReference type="NCBIfam" id="TIGR00557">
    <property type="entry name" value="pdxA"/>
    <property type="match status" value="1"/>
</dbReference>
<dbReference type="PANTHER" id="PTHR30004">
    <property type="entry name" value="4-HYDROXYTHREONINE-4-PHOSPHATE DEHYDROGENASE"/>
    <property type="match status" value="1"/>
</dbReference>
<dbReference type="PANTHER" id="PTHR30004:SF5">
    <property type="entry name" value="4-HYDROXYTHREONINE-4-PHOSPHATE DEHYDROGENASE"/>
    <property type="match status" value="1"/>
</dbReference>
<dbReference type="Pfam" id="PF04166">
    <property type="entry name" value="PdxA"/>
    <property type="match status" value="1"/>
</dbReference>
<dbReference type="SUPFAM" id="SSF53659">
    <property type="entry name" value="Isocitrate/Isopropylmalate dehydrogenase-like"/>
    <property type="match status" value="1"/>
</dbReference>
<feature type="chain" id="PRO_1000128260" description="4-hydroxythreonine-4-phosphate dehydrogenase">
    <location>
        <begin position="1"/>
        <end position="328"/>
    </location>
</feature>
<feature type="binding site" evidence="1">
    <location>
        <position position="134"/>
    </location>
    <ligand>
        <name>substrate</name>
    </ligand>
</feature>
<feature type="binding site" evidence="1">
    <location>
        <position position="135"/>
    </location>
    <ligand>
        <name>substrate</name>
    </ligand>
</feature>
<feature type="binding site" evidence="1">
    <location>
        <position position="164"/>
    </location>
    <ligand>
        <name>a divalent metal cation</name>
        <dbReference type="ChEBI" id="CHEBI:60240"/>
        <note>ligand shared between dimeric partners</note>
    </ligand>
</feature>
<feature type="binding site" evidence="1">
    <location>
        <position position="209"/>
    </location>
    <ligand>
        <name>a divalent metal cation</name>
        <dbReference type="ChEBI" id="CHEBI:60240"/>
        <note>ligand shared between dimeric partners</note>
    </ligand>
</feature>
<feature type="binding site" evidence="1">
    <location>
        <position position="264"/>
    </location>
    <ligand>
        <name>a divalent metal cation</name>
        <dbReference type="ChEBI" id="CHEBI:60240"/>
        <note>ligand shared between dimeric partners</note>
    </ligand>
</feature>
<feature type="binding site" evidence="1">
    <location>
        <position position="272"/>
    </location>
    <ligand>
        <name>substrate</name>
    </ligand>
</feature>
<feature type="binding site" evidence="1">
    <location>
        <position position="281"/>
    </location>
    <ligand>
        <name>substrate</name>
    </ligand>
</feature>
<feature type="binding site" evidence="1">
    <location>
        <position position="290"/>
    </location>
    <ligand>
        <name>substrate</name>
    </ligand>
</feature>
<accession>Q12K60</accession>
<comment type="function">
    <text evidence="1">Catalyzes the NAD(P)-dependent oxidation of 4-(phosphooxy)-L-threonine (HTP) into 2-amino-3-oxo-4-(phosphooxy)butyric acid which spontaneously decarboxylates to form 3-amino-2-oxopropyl phosphate (AHAP).</text>
</comment>
<comment type="catalytic activity">
    <reaction evidence="1">
        <text>4-(phosphooxy)-L-threonine + NAD(+) = 3-amino-2-oxopropyl phosphate + CO2 + NADH</text>
        <dbReference type="Rhea" id="RHEA:32275"/>
        <dbReference type="ChEBI" id="CHEBI:16526"/>
        <dbReference type="ChEBI" id="CHEBI:57279"/>
        <dbReference type="ChEBI" id="CHEBI:57540"/>
        <dbReference type="ChEBI" id="CHEBI:57945"/>
        <dbReference type="ChEBI" id="CHEBI:58452"/>
        <dbReference type="EC" id="1.1.1.262"/>
    </reaction>
</comment>
<comment type="cofactor">
    <cofactor evidence="1">
        <name>Zn(2+)</name>
        <dbReference type="ChEBI" id="CHEBI:29105"/>
    </cofactor>
    <cofactor evidence="1">
        <name>Mg(2+)</name>
        <dbReference type="ChEBI" id="CHEBI:18420"/>
    </cofactor>
    <cofactor evidence="1">
        <name>Co(2+)</name>
        <dbReference type="ChEBI" id="CHEBI:48828"/>
    </cofactor>
    <text evidence="1">Binds 1 divalent metal cation per subunit. Can use ions such as Zn(2+), Mg(2+) or Co(2+).</text>
</comment>
<comment type="pathway">
    <text evidence="1">Cofactor biosynthesis; pyridoxine 5'-phosphate biosynthesis; pyridoxine 5'-phosphate from D-erythrose 4-phosphate: step 4/5.</text>
</comment>
<comment type="subunit">
    <text evidence="1">Homodimer.</text>
</comment>
<comment type="subcellular location">
    <subcellularLocation>
        <location evidence="1">Cytoplasm</location>
    </subcellularLocation>
</comment>
<comment type="miscellaneous">
    <text evidence="1">The active site is located at the dimer interface.</text>
</comment>
<comment type="similarity">
    <text evidence="1">Belongs to the PdxA family.</text>
</comment>
<name>PDXA_SHEDO</name>
<proteinExistence type="inferred from homology"/>
<evidence type="ECO:0000255" key="1">
    <source>
        <dbReference type="HAMAP-Rule" id="MF_00536"/>
    </source>
</evidence>